<protein>
    <recommendedName>
        <fullName>ATP synthase epsilon chain</fullName>
    </recommendedName>
    <alternativeName>
        <fullName>ATP synthase F1 sector epsilon subunit</fullName>
    </alternativeName>
    <alternativeName>
        <fullName>F-ATPase epsilon subunit</fullName>
    </alternativeName>
</protein>
<proteinExistence type="inferred from homology"/>
<feature type="chain" id="PRO_0000188098" description="ATP synthase epsilon chain">
    <location>
        <begin position="1"/>
        <end position="133"/>
    </location>
</feature>
<gene>
    <name type="primary">atpC</name>
    <name type="ordered locus">BpOF4_06845</name>
</gene>
<keyword id="KW-0066">ATP synthesis</keyword>
<keyword id="KW-1003">Cell membrane</keyword>
<keyword id="KW-0139">CF(1)</keyword>
<keyword id="KW-0375">Hydrogen ion transport</keyword>
<keyword id="KW-0406">Ion transport</keyword>
<keyword id="KW-0472">Membrane</keyword>
<keyword id="KW-1185">Reference proteome</keyword>
<keyword id="KW-0813">Transport</keyword>
<accession>P22480</accession>
<accession>D3G0F2</accession>
<evidence type="ECO:0000250" key="1"/>
<evidence type="ECO:0000305" key="2"/>
<reference key="1">
    <citation type="journal article" date="1991" name="Mol. Gen. Genet.">
        <title>Organization and nucleotide sequence of the atp genes encoding the ATP synthase from alkaliphilic Bacillus firmus OF4.</title>
        <authorList>
            <person name="Ivey D.M."/>
            <person name="Krulwich T.A."/>
        </authorList>
    </citation>
    <scope>NUCLEOTIDE SEQUENCE [GENOMIC DNA]</scope>
</reference>
<reference key="2">
    <citation type="submission" date="2000-12" db="EMBL/GenBank/DDBJ databases">
        <authorList>
            <person name="Hicks D."/>
            <person name="Krulwich T.A."/>
        </authorList>
    </citation>
    <scope>SEQUENCE REVISION</scope>
</reference>
<reference key="3">
    <citation type="journal article" date="2011" name="Environ. Microbiol.">
        <title>Genome of alkaliphilic Bacillus pseudofirmus OF4 reveals adaptations that support the ability to grow in an external pH range from 7.5 to 11.4.</title>
        <authorList>
            <person name="Janto B."/>
            <person name="Ahmed A."/>
            <person name="Ito M."/>
            <person name="Liu J."/>
            <person name="Hicks D.B."/>
            <person name="Pagni S."/>
            <person name="Fackelmayer O.J."/>
            <person name="Smith T.A."/>
            <person name="Earl J."/>
            <person name="Elbourne L.D."/>
            <person name="Hassan K."/>
            <person name="Paulsen I.T."/>
            <person name="Kolsto A.B."/>
            <person name="Tourasse N.J."/>
            <person name="Ehrlich G.D."/>
            <person name="Boissy R."/>
            <person name="Ivey D.M."/>
            <person name="Li G."/>
            <person name="Xue Y."/>
            <person name="Ma Y."/>
            <person name="Hu F.Z."/>
            <person name="Krulwich T.A."/>
        </authorList>
    </citation>
    <scope>NUCLEOTIDE SEQUENCE [LARGE SCALE GENOMIC DNA]</scope>
    <source>
        <strain>ATCC BAA-2126 / JCM 17055 / OF4</strain>
    </source>
</reference>
<dbReference type="EMBL" id="AF330160">
    <property type="protein sequence ID" value="AAG48364.1"/>
    <property type="molecule type" value="Genomic_DNA"/>
</dbReference>
<dbReference type="EMBL" id="CP001878">
    <property type="protein sequence ID" value="ADC49427.1"/>
    <property type="molecule type" value="Genomic_DNA"/>
</dbReference>
<dbReference type="RefSeq" id="WP_012960700.1">
    <property type="nucleotide sequence ID" value="NC_013791.2"/>
</dbReference>
<dbReference type="SMR" id="P22480"/>
<dbReference type="STRING" id="398511.BpOF4_06845"/>
<dbReference type="KEGG" id="bpf:BpOF4_06845"/>
<dbReference type="eggNOG" id="COG0355">
    <property type="taxonomic scope" value="Bacteria"/>
</dbReference>
<dbReference type="HOGENOM" id="CLU_084338_1_2_9"/>
<dbReference type="Proteomes" id="UP000001544">
    <property type="component" value="Chromosome"/>
</dbReference>
<dbReference type="GO" id="GO:0005886">
    <property type="term" value="C:plasma membrane"/>
    <property type="evidence" value="ECO:0007669"/>
    <property type="project" value="UniProtKB-SubCell"/>
</dbReference>
<dbReference type="GO" id="GO:0045259">
    <property type="term" value="C:proton-transporting ATP synthase complex"/>
    <property type="evidence" value="ECO:0007669"/>
    <property type="project" value="UniProtKB-KW"/>
</dbReference>
<dbReference type="GO" id="GO:0005524">
    <property type="term" value="F:ATP binding"/>
    <property type="evidence" value="ECO:0007669"/>
    <property type="project" value="UniProtKB-UniRule"/>
</dbReference>
<dbReference type="GO" id="GO:0046933">
    <property type="term" value="F:proton-transporting ATP synthase activity, rotational mechanism"/>
    <property type="evidence" value="ECO:0007669"/>
    <property type="project" value="UniProtKB-UniRule"/>
</dbReference>
<dbReference type="CDD" id="cd12152">
    <property type="entry name" value="F1-ATPase_delta"/>
    <property type="match status" value="1"/>
</dbReference>
<dbReference type="FunFam" id="1.20.5.440:FF:000001">
    <property type="entry name" value="ATP synthase epsilon chain"/>
    <property type="match status" value="1"/>
</dbReference>
<dbReference type="FunFam" id="2.60.15.10:FF:000001">
    <property type="entry name" value="ATP synthase epsilon chain"/>
    <property type="match status" value="1"/>
</dbReference>
<dbReference type="Gene3D" id="1.20.5.440">
    <property type="entry name" value="ATP synthase delta/epsilon subunit, C-terminal domain"/>
    <property type="match status" value="1"/>
</dbReference>
<dbReference type="Gene3D" id="2.60.15.10">
    <property type="entry name" value="F0F1 ATP synthase delta/epsilon subunit, N-terminal"/>
    <property type="match status" value="1"/>
</dbReference>
<dbReference type="HAMAP" id="MF_00530">
    <property type="entry name" value="ATP_synth_epsil_bac"/>
    <property type="match status" value="1"/>
</dbReference>
<dbReference type="InterPro" id="IPR036794">
    <property type="entry name" value="ATP_F1_dsu/esu_C_sf"/>
</dbReference>
<dbReference type="InterPro" id="IPR001469">
    <property type="entry name" value="ATP_synth_F1_dsu/esu"/>
</dbReference>
<dbReference type="InterPro" id="IPR020546">
    <property type="entry name" value="ATP_synth_F1_dsu/esu_N"/>
</dbReference>
<dbReference type="InterPro" id="IPR020547">
    <property type="entry name" value="ATP_synth_F1_esu_C"/>
</dbReference>
<dbReference type="InterPro" id="IPR036771">
    <property type="entry name" value="ATPsynth_dsu/esu_N"/>
</dbReference>
<dbReference type="NCBIfam" id="TIGR01216">
    <property type="entry name" value="ATP_synt_epsi"/>
    <property type="match status" value="1"/>
</dbReference>
<dbReference type="NCBIfam" id="NF001846">
    <property type="entry name" value="PRK00571.1-3"/>
    <property type="match status" value="1"/>
</dbReference>
<dbReference type="NCBIfam" id="NF009977">
    <property type="entry name" value="PRK13442.1"/>
    <property type="match status" value="1"/>
</dbReference>
<dbReference type="NCBIfam" id="NF009980">
    <property type="entry name" value="PRK13446.1"/>
    <property type="match status" value="1"/>
</dbReference>
<dbReference type="PANTHER" id="PTHR13822">
    <property type="entry name" value="ATP SYNTHASE DELTA/EPSILON CHAIN"/>
    <property type="match status" value="1"/>
</dbReference>
<dbReference type="PANTHER" id="PTHR13822:SF10">
    <property type="entry name" value="ATP SYNTHASE EPSILON CHAIN, CHLOROPLASTIC"/>
    <property type="match status" value="1"/>
</dbReference>
<dbReference type="Pfam" id="PF00401">
    <property type="entry name" value="ATP-synt_DE"/>
    <property type="match status" value="1"/>
</dbReference>
<dbReference type="Pfam" id="PF02823">
    <property type="entry name" value="ATP-synt_DE_N"/>
    <property type="match status" value="1"/>
</dbReference>
<dbReference type="SUPFAM" id="SSF46604">
    <property type="entry name" value="Epsilon subunit of F1F0-ATP synthase C-terminal domain"/>
    <property type="match status" value="1"/>
</dbReference>
<dbReference type="SUPFAM" id="SSF51344">
    <property type="entry name" value="Epsilon subunit of F1F0-ATP synthase N-terminal domain"/>
    <property type="match status" value="1"/>
</dbReference>
<sequence>MSTIRVNVVTPDGKVYDGDVDMVVVRTVEGELGILPKHIPLVAPLTVGAVRLKKGNSEEQVAVSGGFVEVRPDQVTILAEAAELPSAIDVDRARAAKERAESRLNSTKQDAVDFKRAELALKRAINRLDVTGK</sequence>
<comment type="function">
    <text evidence="1">Produces ATP from ADP in the presence of a proton gradient across the membrane.</text>
</comment>
<comment type="subunit">
    <text>F-type ATPases have 2 components, CF(1) - the catalytic core - and CF(0) - the membrane proton channel. CF(1) has five subunits: alpha(3), beta(3), gamma(1), delta(1), epsilon(1). CF(0) has three main subunits: a, b and c.</text>
</comment>
<comment type="subcellular location">
    <subcellularLocation>
        <location evidence="1">Cell membrane</location>
        <topology evidence="1">Peripheral membrane protein</topology>
    </subcellularLocation>
</comment>
<comment type="similarity">
    <text evidence="2">Belongs to the ATPase epsilon chain family.</text>
</comment>
<organism>
    <name type="scientific">Alkalihalophilus pseudofirmus (strain ATCC BAA-2126 / JCM 17055 / OF4)</name>
    <name type="common">Bacillus pseudofirmus</name>
    <dbReference type="NCBI Taxonomy" id="398511"/>
    <lineage>
        <taxon>Bacteria</taxon>
        <taxon>Bacillati</taxon>
        <taxon>Bacillota</taxon>
        <taxon>Bacilli</taxon>
        <taxon>Bacillales</taxon>
        <taxon>Bacillaceae</taxon>
        <taxon>Alkalihalophilus</taxon>
    </lineage>
</organism>
<name>ATPE_ALKPO</name>